<sequence>MIKKKKKKSYTSVYALGQYISMSTHKARRVIDQIRGRSYEEALMILELMPYRGCYPIFKLVYSAAANASHNKGFKETNLVISKAEVNQGNTVKKLKPRARGRSYPIKRPTCHITIVLEDRSFDQQYDEYLMYLKNPGYRNAKINLPCYETYSSGGLWDKK</sequence>
<reference key="1">
    <citation type="submission" date="2007-03" db="EMBL/GenBank/DDBJ databases">
        <title>Sequencing analysis of Aethionema coridifolium chloroplast DNA.</title>
        <authorList>
            <person name="Hosouchi T."/>
            <person name="Tsuruoka H."/>
            <person name="Kotani H."/>
        </authorList>
    </citation>
    <scope>NUCLEOTIDE SEQUENCE [LARGE SCALE GENOMIC DNA]</scope>
</reference>
<comment type="function">
    <text evidence="1">This protein binds specifically to 23S rRNA.</text>
</comment>
<comment type="function">
    <text evidence="1">The globular domain of the protein is located near the polypeptide exit tunnel on the outside of the subunit, while an extended beta-hairpin is found that lines the wall of the exit tunnel in the center of the 70S ribosome.</text>
</comment>
<comment type="subunit">
    <text evidence="1">Part of the 50S ribosomal subunit.</text>
</comment>
<comment type="subcellular location">
    <subcellularLocation>
        <location>Plastid</location>
        <location>Chloroplast</location>
    </subcellularLocation>
</comment>
<comment type="similarity">
    <text evidence="2">Belongs to the universal ribosomal protein uL22 family.</text>
</comment>
<accession>A4QJF4</accession>
<protein>
    <recommendedName>
        <fullName evidence="2">Large ribosomal subunit protein uL22c</fullName>
    </recommendedName>
    <alternativeName>
        <fullName>50S ribosomal protein L22, chloroplastic</fullName>
    </alternativeName>
</protein>
<organism>
    <name type="scientific">Aethionema cordifolium</name>
    <name type="common">Lebanon stonecress</name>
    <dbReference type="NCBI Taxonomy" id="434059"/>
    <lineage>
        <taxon>Eukaryota</taxon>
        <taxon>Viridiplantae</taxon>
        <taxon>Streptophyta</taxon>
        <taxon>Embryophyta</taxon>
        <taxon>Tracheophyta</taxon>
        <taxon>Spermatophyta</taxon>
        <taxon>Magnoliopsida</taxon>
        <taxon>eudicotyledons</taxon>
        <taxon>Gunneridae</taxon>
        <taxon>Pentapetalae</taxon>
        <taxon>rosids</taxon>
        <taxon>malvids</taxon>
        <taxon>Brassicales</taxon>
        <taxon>Brassicaceae</taxon>
        <taxon>Aethionemeae</taxon>
        <taxon>Aethionema</taxon>
    </lineage>
</organism>
<gene>
    <name type="primary">rpl22</name>
</gene>
<evidence type="ECO:0000250" key="1"/>
<evidence type="ECO:0000305" key="2"/>
<feature type="chain" id="PRO_0000354552" description="Large ribosomal subunit protein uL22c">
    <location>
        <begin position="1"/>
        <end position="160"/>
    </location>
</feature>
<dbReference type="EMBL" id="AP009366">
    <property type="protein sequence ID" value="BAF49809.1"/>
    <property type="molecule type" value="Genomic_DNA"/>
</dbReference>
<dbReference type="RefSeq" id="YP_001122985.1">
    <property type="nucleotide sequence ID" value="NC_009265.1"/>
</dbReference>
<dbReference type="SMR" id="A4QJF4"/>
<dbReference type="GeneID" id="4968574"/>
<dbReference type="GO" id="GO:0009507">
    <property type="term" value="C:chloroplast"/>
    <property type="evidence" value="ECO:0007669"/>
    <property type="project" value="UniProtKB-SubCell"/>
</dbReference>
<dbReference type="GO" id="GO:0015934">
    <property type="term" value="C:large ribosomal subunit"/>
    <property type="evidence" value="ECO:0007669"/>
    <property type="project" value="InterPro"/>
</dbReference>
<dbReference type="GO" id="GO:0019843">
    <property type="term" value="F:rRNA binding"/>
    <property type="evidence" value="ECO:0007669"/>
    <property type="project" value="UniProtKB-UniRule"/>
</dbReference>
<dbReference type="GO" id="GO:0003735">
    <property type="term" value="F:structural constituent of ribosome"/>
    <property type="evidence" value="ECO:0007669"/>
    <property type="project" value="InterPro"/>
</dbReference>
<dbReference type="GO" id="GO:0006412">
    <property type="term" value="P:translation"/>
    <property type="evidence" value="ECO:0007669"/>
    <property type="project" value="UniProtKB-UniRule"/>
</dbReference>
<dbReference type="CDD" id="cd00336">
    <property type="entry name" value="Ribosomal_L22"/>
    <property type="match status" value="1"/>
</dbReference>
<dbReference type="FunFam" id="3.90.470.10:FF:000006">
    <property type="entry name" value="50S ribosomal protein L22, chloroplastic"/>
    <property type="match status" value="1"/>
</dbReference>
<dbReference type="Gene3D" id="3.90.470.10">
    <property type="entry name" value="Ribosomal protein L22/L17"/>
    <property type="match status" value="1"/>
</dbReference>
<dbReference type="HAMAP" id="MF_01331_B">
    <property type="entry name" value="Ribosomal_uL22_B"/>
    <property type="match status" value="1"/>
</dbReference>
<dbReference type="InterPro" id="IPR001063">
    <property type="entry name" value="Ribosomal_uL22"/>
</dbReference>
<dbReference type="InterPro" id="IPR005727">
    <property type="entry name" value="Ribosomal_uL22_bac/chlpt-type"/>
</dbReference>
<dbReference type="InterPro" id="IPR047867">
    <property type="entry name" value="Ribosomal_uL22_bac/org-type"/>
</dbReference>
<dbReference type="InterPro" id="IPR018260">
    <property type="entry name" value="Ribosomal_uL22_CS"/>
</dbReference>
<dbReference type="InterPro" id="IPR036394">
    <property type="entry name" value="Ribosomal_uL22_sf"/>
</dbReference>
<dbReference type="NCBIfam" id="TIGR01044">
    <property type="entry name" value="rplV_bact"/>
    <property type="match status" value="1"/>
</dbReference>
<dbReference type="PANTHER" id="PTHR13501">
    <property type="entry name" value="CHLOROPLAST 50S RIBOSOMAL PROTEIN L22-RELATED"/>
    <property type="match status" value="1"/>
</dbReference>
<dbReference type="PANTHER" id="PTHR13501:SF10">
    <property type="entry name" value="LARGE RIBOSOMAL SUBUNIT PROTEIN UL22M"/>
    <property type="match status" value="1"/>
</dbReference>
<dbReference type="Pfam" id="PF00237">
    <property type="entry name" value="Ribosomal_L22"/>
    <property type="match status" value="1"/>
</dbReference>
<dbReference type="SUPFAM" id="SSF54843">
    <property type="entry name" value="Ribosomal protein L22"/>
    <property type="match status" value="1"/>
</dbReference>
<dbReference type="PROSITE" id="PS00464">
    <property type="entry name" value="RIBOSOMAL_L22"/>
    <property type="match status" value="1"/>
</dbReference>
<geneLocation type="chloroplast"/>
<proteinExistence type="inferred from homology"/>
<name>RK22_AETCO</name>
<keyword id="KW-0150">Chloroplast</keyword>
<keyword id="KW-0934">Plastid</keyword>
<keyword id="KW-0687">Ribonucleoprotein</keyword>
<keyword id="KW-0689">Ribosomal protein</keyword>
<keyword id="KW-0694">RNA-binding</keyword>
<keyword id="KW-0699">rRNA-binding</keyword>